<evidence type="ECO:0000250" key="1"/>
<evidence type="ECO:0000250" key="2">
    <source>
        <dbReference type="UniProtKB" id="P00157"/>
    </source>
</evidence>
<evidence type="ECO:0000255" key="3">
    <source>
        <dbReference type="PROSITE-ProRule" id="PRU00967"/>
    </source>
</evidence>
<evidence type="ECO:0000255" key="4">
    <source>
        <dbReference type="PROSITE-ProRule" id="PRU00968"/>
    </source>
</evidence>
<dbReference type="EMBL" id="AF076069">
    <property type="protein sequence ID" value="AAC68626.1"/>
    <property type="molecule type" value="Genomic_DNA"/>
</dbReference>
<dbReference type="SMR" id="O79215"/>
<dbReference type="GO" id="GO:0005743">
    <property type="term" value="C:mitochondrial inner membrane"/>
    <property type="evidence" value="ECO:0007669"/>
    <property type="project" value="UniProtKB-SubCell"/>
</dbReference>
<dbReference type="GO" id="GO:0045275">
    <property type="term" value="C:respiratory chain complex III"/>
    <property type="evidence" value="ECO:0007669"/>
    <property type="project" value="InterPro"/>
</dbReference>
<dbReference type="GO" id="GO:0046872">
    <property type="term" value="F:metal ion binding"/>
    <property type="evidence" value="ECO:0007669"/>
    <property type="project" value="UniProtKB-KW"/>
</dbReference>
<dbReference type="GO" id="GO:0008121">
    <property type="term" value="F:ubiquinol-cytochrome-c reductase activity"/>
    <property type="evidence" value="ECO:0007669"/>
    <property type="project" value="InterPro"/>
</dbReference>
<dbReference type="GO" id="GO:0006122">
    <property type="term" value="P:mitochondrial electron transport, ubiquinol to cytochrome c"/>
    <property type="evidence" value="ECO:0007669"/>
    <property type="project" value="TreeGrafter"/>
</dbReference>
<dbReference type="CDD" id="cd00290">
    <property type="entry name" value="cytochrome_b_C"/>
    <property type="match status" value="1"/>
</dbReference>
<dbReference type="CDD" id="cd00284">
    <property type="entry name" value="Cytochrome_b_N"/>
    <property type="match status" value="1"/>
</dbReference>
<dbReference type="FunFam" id="1.20.810.10:FF:000002">
    <property type="entry name" value="Cytochrome b"/>
    <property type="match status" value="1"/>
</dbReference>
<dbReference type="Gene3D" id="1.20.810.10">
    <property type="entry name" value="Cytochrome Bc1 Complex, Chain C"/>
    <property type="match status" value="1"/>
</dbReference>
<dbReference type="InterPro" id="IPR005798">
    <property type="entry name" value="Cyt_b/b6_C"/>
</dbReference>
<dbReference type="InterPro" id="IPR036150">
    <property type="entry name" value="Cyt_b/b6_C_sf"/>
</dbReference>
<dbReference type="InterPro" id="IPR005797">
    <property type="entry name" value="Cyt_b/b6_N"/>
</dbReference>
<dbReference type="InterPro" id="IPR027387">
    <property type="entry name" value="Cytb/b6-like_sf"/>
</dbReference>
<dbReference type="InterPro" id="IPR030689">
    <property type="entry name" value="Cytochrome_b"/>
</dbReference>
<dbReference type="InterPro" id="IPR048260">
    <property type="entry name" value="Cytochrome_b_C_euk/bac"/>
</dbReference>
<dbReference type="InterPro" id="IPR048259">
    <property type="entry name" value="Cytochrome_b_N_euk/bac"/>
</dbReference>
<dbReference type="InterPro" id="IPR016174">
    <property type="entry name" value="Di-haem_cyt_TM"/>
</dbReference>
<dbReference type="PANTHER" id="PTHR19271">
    <property type="entry name" value="CYTOCHROME B"/>
    <property type="match status" value="1"/>
</dbReference>
<dbReference type="PANTHER" id="PTHR19271:SF16">
    <property type="entry name" value="CYTOCHROME B"/>
    <property type="match status" value="1"/>
</dbReference>
<dbReference type="Pfam" id="PF00032">
    <property type="entry name" value="Cytochrom_B_C"/>
    <property type="match status" value="1"/>
</dbReference>
<dbReference type="Pfam" id="PF00033">
    <property type="entry name" value="Cytochrome_B"/>
    <property type="match status" value="1"/>
</dbReference>
<dbReference type="PIRSF" id="PIRSF038885">
    <property type="entry name" value="COB"/>
    <property type="match status" value="1"/>
</dbReference>
<dbReference type="SUPFAM" id="SSF81648">
    <property type="entry name" value="a domain/subunit of cytochrome bc1 complex (Ubiquinol-cytochrome c reductase)"/>
    <property type="match status" value="1"/>
</dbReference>
<dbReference type="SUPFAM" id="SSF81342">
    <property type="entry name" value="Transmembrane di-heme cytochromes"/>
    <property type="match status" value="1"/>
</dbReference>
<dbReference type="PROSITE" id="PS51003">
    <property type="entry name" value="CYTB_CTER"/>
    <property type="match status" value="1"/>
</dbReference>
<dbReference type="PROSITE" id="PS51002">
    <property type="entry name" value="CYTB_NTER"/>
    <property type="match status" value="1"/>
</dbReference>
<sequence>MAPNIRKSHPLLKMVNNSLIDLPTPSNISSWWNFGSLLGICLMTQILTGLLLAMHYTADTTLAFSSVAHTCRNVQYGWLIRNLHANGASFFFICIYFHIGRGLYYGSYLYKETWNTGVILLLTLMATAFVGYVLPWGQMSFWGATVITNLFSAIPYIGQTLVEWAWGGFSVDNPTLTRFFALHFLLPFMIAGLTLIHLTFLHESGSNNPLGIVSNCDKIPFHPYFTLKDILGFTLMFLPLTTLALFSPNLLGDPENFTPANPLVTPPHIKPEWYFLFAYAILRSIPNKLGGVLALAASVLILFLIPFLHKAKQRTMTFRPISQLLFWILVANLLILTWVGSQPVEHPFIIIGQLASVTYFTILLVLFPIIGALENKMLNY</sequence>
<geneLocation type="mitochondrion"/>
<reference key="1">
    <citation type="journal article" date="1998" name="Mol. Biol. Evol.">
        <title>Body size effects and rates of cytochrome-b evolution in tube-nosed seabirds.</title>
        <authorList>
            <person name="Nunn G.B."/>
            <person name="Stanley S.E."/>
        </authorList>
    </citation>
    <scope>NUCLEOTIDE SEQUENCE [GENOMIC DNA]</scope>
    <source>
        <strain>Isolate Sprion-MI-1</strain>
    </source>
</reference>
<accession>O79215</accession>
<name>CYB_PACSA</name>
<organism>
    <name type="scientific">Pachyptila salvini</name>
    <name type="common">Salvin's prion</name>
    <name type="synonym">Prion vittatus salvini</name>
    <dbReference type="NCBI Taxonomy" id="79636"/>
    <lineage>
        <taxon>Eukaryota</taxon>
        <taxon>Metazoa</taxon>
        <taxon>Chordata</taxon>
        <taxon>Craniata</taxon>
        <taxon>Vertebrata</taxon>
        <taxon>Euteleostomi</taxon>
        <taxon>Archelosauria</taxon>
        <taxon>Archosauria</taxon>
        <taxon>Dinosauria</taxon>
        <taxon>Saurischia</taxon>
        <taxon>Theropoda</taxon>
        <taxon>Coelurosauria</taxon>
        <taxon>Aves</taxon>
        <taxon>Neognathae</taxon>
        <taxon>Neoaves</taxon>
        <taxon>Aequornithes</taxon>
        <taxon>Procellariiformes</taxon>
        <taxon>Procellariidae</taxon>
        <taxon>Pachyptila</taxon>
    </lineage>
</organism>
<protein>
    <recommendedName>
        <fullName>Cytochrome b</fullName>
    </recommendedName>
    <alternativeName>
        <fullName>Complex III subunit 3</fullName>
    </alternativeName>
    <alternativeName>
        <fullName>Complex III subunit III</fullName>
    </alternativeName>
    <alternativeName>
        <fullName>Cytochrome b-c1 complex subunit 3</fullName>
    </alternativeName>
    <alternativeName>
        <fullName>Ubiquinol-cytochrome-c reductase complex cytochrome b subunit</fullName>
    </alternativeName>
</protein>
<gene>
    <name type="primary">MT-CYB</name>
    <name type="synonym">COB</name>
    <name type="synonym">CYTB</name>
    <name type="synonym">MTCYB</name>
</gene>
<proteinExistence type="inferred from homology"/>
<comment type="function">
    <text evidence="2">Component of the ubiquinol-cytochrome c reductase complex (complex III or cytochrome b-c1 complex) that is part of the mitochondrial respiratory chain. The b-c1 complex mediates electron transfer from ubiquinol to cytochrome c. Contributes to the generation of a proton gradient across the mitochondrial membrane that is then used for ATP synthesis.</text>
</comment>
<comment type="cofactor">
    <cofactor evidence="2">
        <name>heme b</name>
        <dbReference type="ChEBI" id="CHEBI:60344"/>
    </cofactor>
    <text evidence="2">Binds 2 heme b groups non-covalently.</text>
</comment>
<comment type="subunit">
    <text evidence="2">The cytochrome bc1 complex contains 11 subunits: 3 respiratory subunits (MT-CYB, CYC1 and UQCRFS1), 2 core proteins (UQCRC1 and UQCRC2) and 6 low-molecular weight proteins (UQCRH/QCR6, UQCRB/QCR7, UQCRQ/QCR8, UQCR10/QCR9, UQCR11/QCR10 and a cleavage product of UQCRFS1). This cytochrome bc1 complex then forms a dimer.</text>
</comment>
<comment type="subcellular location">
    <subcellularLocation>
        <location evidence="2">Mitochondrion inner membrane</location>
        <topology evidence="2">Multi-pass membrane protein</topology>
    </subcellularLocation>
</comment>
<comment type="miscellaneous">
    <text evidence="1">Heme 1 (or BL or b562) is low-potential and absorbs at about 562 nm, and heme 2 (or BH or b566) is high-potential and absorbs at about 566 nm.</text>
</comment>
<comment type="similarity">
    <text evidence="3 4">Belongs to the cytochrome b family.</text>
</comment>
<comment type="caution">
    <text evidence="2">The full-length protein contains only eight transmembrane helices, not nine as predicted by bioinformatics tools.</text>
</comment>
<keyword id="KW-0249">Electron transport</keyword>
<keyword id="KW-0349">Heme</keyword>
<keyword id="KW-0408">Iron</keyword>
<keyword id="KW-0472">Membrane</keyword>
<keyword id="KW-0479">Metal-binding</keyword>
<keyword id="KW-0496">Mitochondrion</keyword>
<keyword id="KW-0999">Mitochondrion inner membrane</keyword>
<keyword id="KW-0679">Respiratory chain</keyword>
<keyword id="KW-0812">Transmembrane</keyword>
<keyword id="KW-1133">Transmembrane helix</keyword>
<keyword id="KW-0813">Transport</keyword>
<keyword id="KW-0830">Ubiquinone</keyword>
<feature type="chain" id="PRO_0000061336" description="Cytochrome b">
    <location>
        <begin position="1"/>
        <end position="380"/>
    </location>
</feature>
<feature type="transmembrane region" description="Helical" evidence="2">
    <location>
        <begin position="34"/>
        <end position="54"/>
    </location>
</feature>
<feature type="transmembrane region" description="Helical" evidence="2">
    <location>
        <begin position="78"/>
        <end position="99"/>
    </location>
</feature>
<feature type="transmembrane region" description="Helical" evidence="2">
    <location>
        <begin position="114"/>
        <end position="134"/>
    </location>
</feature>
<feature type="transmembrane region" description="Helical" evidence="2">
    <location>
        <begin position="179"/>
        <end position="199"/>
    </location>
</feature>
<feature type="transmembrane region" description="Helical" evidence="2">
    <location>
        <begin position="227"/>
        <end position="247"/>
    </location>
</feature>
<feature type="transmembrane region" description="Helical" evidence="2">
    <location>
        <begin position="289"/>
        <end position="309"/>
    </location>
</feature>
<feature type="transmembrane region" description="Helical" evidence="2">
    <location>
        <begin position="321"/>
        <end position="341"/>
    </location>
</feature>
<feature type="transmembrane region" description="Helical" evidence="2">
    <location>
        <begin position="348"/>
        <end position="368"/>
    </location>
</feature>
<feature type="binding site" description="axial binding residue" evidence="2">
    <location>
        <position position="84"/>
    </location>
    <ligand>
        <name>heme b</name>
        <dbReference type="ChEBI" id="CHEBI:60344"/>
        <label>b562</label>
    </ligand>
    <ligandPart>
        <name>Fe</name>
        <dbReference type="ChEBI" id="CHEBI:18248"/>
    </ligandPart>
</feature>
<feature type="binding site" description="axial binding residue" evidence="2">
    <location>
        <position position="98"/>
    </location>
    <ligand>
        <name>heme b</name>
        <dbReference type="ChEBI" id="CHEBI:60344"/>
        <label>b566</label>
    </ligand>
    <ligandPart>
        <name>Fe</name>
        <dbReference type="ChEBI" id="CHEBI:18248"/>
    </ligandPart>
</feature>
<feature type="binding site" description="axial binding residue" evidence="2">
    <location>
        <position position="183"/>
    </location>
    <ligand>
        <name>heme b</name>
        <dbReference type="ChEBI" id="CHEBI:60344"/>
        <label>b562</label>
    </ligand>
    <ligandPart>
        <name>Fe</name>
        <dbReference type="ChEBI" id="CHEBI:18248"/>
    </ligandPart>
</feature>
<feature type="binding site" description="axial binding residue" evidence="2">
    <location>
        <position position="197"/>
    </location>
    <ligand>
        <name>heme b</name>
        <dbReference type="ChEBI" id="CHEBI:60344"/>
        <label>b566</label>
    </ligand>
    <ligandPart>
        <name>Fe</name>
        <dbReference type="ChEBI" id="CHEBI:18248"/>
    </ligandPart>
</feature>
<feature type="binding site" evidence="2">
    <location>
        <position position="202"/>
    </location>
    <ligand>
        <name>a ubiquinone</name>
        <dbReference type="ChEBI" id="CHEBI:16389"/>
    </ligand>
</feature>